<dbReference type="EC" id="2.1.1.117" evidence="3 4 6"/>
<dbReference type="EC" id="2.1.1.-" evidence="3"/>
<dbReference type="EC" id="2.1.1.89" evidence="3"/>
<dbReference type="EMBL" id="JN185323">
    <property type="protein sequence ID" value="AFK73709.1"/>
    <property type="molecule type" value="mRNA"/>
</dbReference>
<dbReference type="EMBL" id="JQ658999">
    <property type="protein sequence ID" value="AFB74611.1"/>
    <property type="molecule type" value="Genomic_DNA"/>
</dbReference>
<dbReference type="PDB" id="6I5Q">
    <property type="method" value="X-ray"/>
    <property type="resolution" value="3.05 A"/>
    <property type="chains" value="A/B/C/D=1-390"/>
</dbReference>
<dbReference type="PDB" id="6I5Z">
    <property type="method" value="X-ray"/>
    <property type="resolution" value="3.00 A"/>
    <property type="chains" value="A/B/C/D=1-390"/>
</dbReference>
<dbReference type="PDB" id="6I6K">
    <property type="method" value="X-ray"/>
    <property type="resolution" value="1.49 A"/>
    <property type="chains" value="A/B=1-390"/>
</dbReference>
<dbReference type="PDB" id="6I6L">
    <property type="method" value="X-ray"/>
    <property type="resolution" value="1.29 A"/>
    <property type="chains" value="A/B=1-390"/>
</dbReference>
<dbReference type="PDB" id="6I6M">
    <property type="method" value="X-ray"/>
    <property type="resolution" value="1.20 A"/>
    <property type="chains" value="A/B=1-390"/>
</dbReference>
<dbReference type="PDB" id="6I6N">
    <property type="method" value="X-ray"/>
    <property type="resolution" value="1.50 A"/>
    <property type="chains" value="A/B=1-390"/>
</dbReference>
<dbReference type="PDBsum" id="6I5Q"/>
<dbReference type="PDBsum" id="6I5Z"/>
<dbReference type="PDBsum" id="6I6K"/>
<dbReference type="PDBsum" id="6I6L"/>
<dbReference type="PDBsum" id="6I6M"/>
<dbReference type="PDBsum" id="6I6N"/>
<dbReference type="SMR" id="I3V6A7"/>
<dbReference type="GO" id="GO:0030777">
    <property type="term" value="F:(S)-scoulerine 9-O-methyltransferase activity"/>
    <property type="evidence" value="ECO:0007669"/>
    <property type="project" value="UniProtKB-EC"/>
</dbReference>
<dbReference type="GO" id="GO:0008168">
    <property type="term" value="F:methyltransferase activity"/>
    <property type="evidence" value="ECO:0000314"/>
    <property type="project" value="UniProtKB"/>
</dbReference>
<dbReference type="GO" id="GO:0008171">
    <property type="term" value="F:O-methyltransferase activity"/>
    <property type="evidence" value="ECO:0007669"/>
    <property type="project" value="InterPro"/>
</dbReference>
<dbReference type="GO" id="GO:0046983">
    <property type="term" value="F:protein dimerization activity"/>
    <property type="evidence" value="ECO:0007669"/>
    <property type="project" value="InterPro"/>
</dbReference>
<dbReference type="GO" id="GO:0030762">
    <property type="term" value="F:tetrahydrocolumbamine 2-O-methyltransferase activity"/>
    <property type="evidence" value="ECO:0007669"/>
    <property type="project" value="UniProtKB-EC"/>
</dbReference>
<dbReference type="GO" id="GO:0009708">
    <property type="term" value="P:benzyl isoquinoline alkaloid biosynthetic process"/>
    <property type="evidence" value="ECO:0000314"/>
    <property type="project" value="UniProtKB"/>
</dbReference>
<dbReference type="GO" id="GO:0032259">
    <property type="term" value="P:methylation"/>
    <property type="evidence" value="ECO:0007669"/>
    <property type="project" value="UniProtKB-KW"/>
</dbReference>
<dbReference type="FunFam" id="1.10.10.10:FF:000357">
    <property type="entry name" value="Caffeic acid 3-O-methyltransferase"/>
    <property type="match status" value="1"/>
</dbReference>
<dbReference type="Gene3D" id="3.40.50.150">
    <property type="entry name" value="Vaccinia Virus protein VP39"/>
    <property type="match status" value="1"/>
</dbReference>
<dbReference type="Gene3D" id="1.10.10.10">
    <property type="entry name" value="Winged helix-like DNA-binding domain superfamily/Winged helix DNA-binding domain"/>
    <property type="match status" value="1"/>
</dbReference>
<dbReference type="InterPro" id="IPR016461">
    <property type="entry name" value="COMT-like"/>
</dbReference>
<dbReference type="InterPro" id="IPR001077">
    <property type="entry name" value="O_MeTrfase_dom"/>
</dbReference>
<dbReference type="InterPro" id="IPR012967">
    <property type="entry name" value="Plant_O-MeTrfase_dimerisation"/>
</dbReference>
<dbReference type="InterPro" id="IPR029063">
    <property type="entry name" value="SAM-dependent_MTases_sf"/>
</dbReference>
<dbReference type="InterPro" id="IPR036388">
    <property type="entry name" value="WH-like_DNA-bd_sf"/>
</dbReference>
<dbReference type="InterPro" id="IPR036390">
    <property type="entry name" value="WH_DNA-bd_sf"/>
</dbReference>
<dbReference type="PANTHER" id="PTHR11746">
    <property type="entry name" value="O-METHYLTRANSFERASE"/>
    <property type="match status" value="1"/>
</dbReference>
<dbReference type="Pfam" id="PF08100">
    <property type="entry name" value="Dimerisation"/>
    <property type="match status" value="1"/>
</dbReference>
<dbReference type="Pfam" id="PF00891">
    <property type="entry name" value="Methyltransf_2"/>
    <property type="match status" value="1"/>
</dbReference>
<dbReference type="PIRSF" id="PIRSF005739">
    <property type="entry name" value="O-mtase"/>
    <property type="match status" value="1"/>
</dbReference>
<dbReference type="SUPFAM" id="SSF53335">
    <property type="entry name" value="S-adenosyl-L-methionine-dependent methyltransferases"/>
    <property type="match status" value="1"/>
</dbReference>
<dbReference type="SUPFAM" id="SSF46785">
    <property type="entry name" value="Winged helix' DNA-binding domain"/>
    <property type="match status" value="1"/>
</dbReference>
<dbReference type="PROSITE" id="PS51683">
    <property type="entry name" value="SAM_OMT_II"/>
    <property type="match status" value="1"/>
</dbReference>
<comment type="function">
    <text evidence="3 4 5">Methyltransferase involved in the biosynthesis of the benzylisoquinoline alkaloid noscapine (PubMed:22535422, PubMed:22653730, PubMed:29610307). Catalyzes the conversion of (S)-scoulerine to (S)-tetrahydrocolumbamine (PubMed:22535422, PubMed:22653730). Can convert (S)-tetrahydrocolumbamine to tetrahydropalmatine (PubMed:22535422). Can convert (S)-norreticuline to (S)-norcodamine (PubMed:22535422). Can convert (S)-reticuline to (S)-codamine (PubMed:22535422). Substrate preference is (S)-scoulerine &gt; (S)-tetrahydrocolumbamine &gt; (S)-norreticuline &gt; (S)-reticuline (PubMed:22535422).</text>
</comment>
<comment type="catalytic activity">
    <reaction evidence="3 4 6">
        <text>(S)-scoulerine + S-adenosyl-L-methionine = (S)-tetrahydrocolumbamine + S-adenosyl-L-homocysteine + H(+)</text>
        <dbReference type="Rhea" id="RHEA:23808"/>
        <dbReference type="ChEBI" id="CHEBI:15378"/>
        <dbReference type="ChEBI" id="CHEBI:17129"/>
        <dbReference type="ChEBI" id="CHEBI:17772"/>
        <dbReference type="ChEBI" id="CHEBI:57856"/>
        <dbReference type="ChEBI" id="CHEBI:59789"/>
        <dbReference type="EC" id="2.1.1.117"/>
    </reaction>
    <physiologicalReaction direction="left-to-right" evidence="10">
        <dbReference type="Rhea" id="RHEA:23809"/>
    </physiologicalReaction>
</comment>
<comment type="catalytic activity">
    <reaction evidence="3">
        <text>(S)-tetrahydrocolumbamine + S-adenosyl-L-methionine = (S)-tetrahydropalmatine + S-adenosyl-L-homocysteine + H(+)</text>
        <dbReference type="Rhea" id="RHEA:22536"/>
        <dbReference type="ChEBI" id="CHEBI:15378"/>
        <dbReference type="ChEBI" id="CHEBI:16563"/>
        <dbReference type="ChEBI" id="CHEBI:17772"/>
        <dbReference type="ChEBI" id="CHEBI:57856"/>
        <dbReference type="ChEBI" id="CHEBI:59789"/>
        <dbReference type="EC" id="2.1.1.89"/>
    </reaction>
    <physiologicalReaction direction="left-to-right" evidence="10">
        <dbReference type="Rhea" id="RHEA:22537"/>
    </physiologicalReaction>
</comment>
<comment type="catalytic activity">
    <reaction evidence="3">
        <text>(S)-norreticuline + S-adenosyl-L-methionine = (S)-norcodamine + S-adenosyl-L-homocysteine + H(+)</text>
        <dbReference type="Rhea" id="RHEA:22180"/>
        <dbReference type="ChEBI" id="CHEBI:15378"/>
        <dbReference type="ChEBI" id="CHEBI:57856"/>
        <dbReference type="ChEBI" id="CHEBI:59789"/>
        <dbReference type="ChEBI" id="CHEBI:143271"/>
        <dbReference type="ChEBI" id="CHEBI:143273"/>
    </reaction>
    <physiologicalReaction direction="left-to-right" evidence="10">
        <dbReference type="Rhea" id="RHEA:22181"/>
    </physiologicalReaction>
</comment>
<comment type="catalytic activity">
    <reaction evidence="3">
        <text>(S)-reticuline + S-adenosyl-L-methionine = (S)-codamine + S-adenosyl-L-homocysteine + H(+)</text>
        <dbReference type="Rhea" id="RHEA:59532"/>
        <dbReference type="ChEBI" id="CHEBI:15378"/>
        <dbReference type="ChEBI" id="CHEBI:57856"/>
        <dbReference type="ChEBI" id="CHEBI:57873"/>
        <dbReference type="ChEBI" id="CHEBI:59789"/>
        <dbReference type="ChEBI" id="CHEBI:143148"/>
    </reaction>
    <physiologicalReaction direction="left-to-right" evidence="10">
        <dbReference type="Rhea" id="RHEA:59533"/>
    </physiologicalReaction>
</comment>
<comment type="biophysicochemical properties">
    <kinetics>
        <KM evidence="3">28.5 uM for (S)-scoulerine</KM>
        <KM evidence="3">70.3 uM for (S)-reticuline</KM>
        <KM evidence="3">19 uM for S-adenosyl-L-methionine</KM>
        <Vmax evidence="3">2036.0 nmol/min/mg enzyme with (S)-scoulerine as substrate</Vmax>
        <Vmax evidence="3">184.4 nmol/min/mg enzyme with (S)-reticuline as substrate</Vmax>
        <Vmax evidence="3">1290.0 nmol/min/mg enzyme with S-adenosyl-L-methionine as substrate</Vmax>
    </kinetics>
</comment>
<comment type="pathway">
    <text evidence="9">Alkaloid biosynthesis.</text>
</comment>
<comment type="subunit">
    <text evidence="6">Homodimer.</text>
</comment>
<comment type="tissue specificity">
    <text evidence="3 4">Highly expressed in capsules (PubMed:22653730). Expressed is stems (PubMed:22535422, PubMed:22653730). Expressed at low levels in roots (PubMed:22535422).</text>
</comment>
<comment type="similarity">
    <text evidence="9">Belongs to the class I-like SAM-binding methyltransferase superfamily. Cation-independent O-methyltransferase family. COMT subfamily.</text>
</comment>
<keyword id="KW-0002">3D-structure</keyword>
<keyword id="KW-0017">Alkaloid metabolism</keyword>
<keyword id="KW-0489">Methyltransferase</keyword>
<keyword id="KW-0949">S-adenosyl-L-methionine</keyword>
<keyword id="KW-0808">Transferase</keyword>
<accession>I3V6A7</accession>
<accession>I3PLQ5</accession>
<organism>
    <name type="scientific">Papaver somniferum</name>
    <name type="common">Opium poppy</name>
    <dbReference type="NCBI Taxonomy" id="3469"/>
    <lineage>
        <taxon>Eukaryota</taxon>
        <taxon>Viridiplantae</taxon>
        <taxon>Streptophyta</taxon>
        <taxon>Embryophyta</taxon>
        <taxon>Tracheophyta</taxon>
        <taxon>Spermatophyta</taxon>
        <taxon>Magnoliopsida</taxon>
        <taxon>Ranunculales</taxon>
        <taxon>Papaveraceae</taxon>
        <taxon>Papaveroideae</taxon>
        <taxon>Papaver</taxon>
    </lineage>
</organism>
<sequence>MATNGEIFNTYGHNRQTATVTKITASNESSNGVCYLSETANLGKLICIPMALRAAMELNVFQLISKFGTDAKVSASEIASKMPNAKNNPEAAMYLDRILRLLGASSILSVSTTKKSINRGGDDVVVHEKLYGLTNSSCCLVPRQEDGVSLVEELLFTSDKVVVDSFFKLKCVVEEKDSVPFEVAHGAKIFEYAATEPRMNQVFNDGMAVFSIVVFEAVFRFYDGFLDMKELLDVGGGIGTSVSKIVAKYPLIRGVNFDLPHVISVAPQYPGVEHVAGDMFEEVPKGQNMLLKWVLHDWGDERCVKLLKNCWNSLPVGGKVLIIEFVLPNELGNNAESFNALIPDLLLMALNPGGKERTISEYDDLGKAAGFIKTIPIPISNGLHVIEFHK</sequence>
<protein>
    <recommendedName>
        <fullName evidence="7">Scoulerine-9-O-methyltransferase 1</fullName>
        <shortName evidence="7">PsSOMT1</shortName>
        <ecNumber evidence="3 4 6">2.1.1.117</ecNumber>
    </recommendedName>
    <alternativeName>
        <fullName evidence="9">Norreticuline 3-O-methyltransferase SOMT1</fullName>
        <ecNumber evidence="3">2.1.1.-</ecNumber>
    </alternativeName>
    <alternativeName>
        <fullName evidence="8">O-methyltransferase 1</fullName>
    </alternativeName>
    <alternativeName>
        <fullName evidence="9">Reticuline 3-O-methyltransferase SOMT1</fullName>
        <ecNumber evidence="3">2.1.1.-</ecNumber>
    </alternativeName>
    <alternativeName>
        <fullName evidence="9">Tetrahydrocolumbamine 2-O-methyltransferase SOMT1</fullName>
        <ecNumber evidence="3">2.1.1.89</ecNumber>
    </alternativeName>
</protein>
<name>SOMT1_PAPSO</name>
<feature type="chain" id="PRO_0000447591" description="Scoulerine-9-O-methyltransferase 1">
    <location>
        <begin position="1"/>
        <end position="390"/>
    </location>
</feature>
<feature type="active site" description="Proton acceptor" evidence="2 6">
    <location>
        <position position="296"/>
    </location>
</feature>
<feature type="binding site" evidence="11 12">
    <location>
        <position position="153"/>
    </location>
    <ligand>
        <name>substrate</name>
    </ligand>
</feature>
<feature type="binding site" evidence="1">
    <location>
        <position position="207"/>
    </location>
    <ligand>
        <name>S-adenosyl-L-methionine</name>
        <dbReference type="ChEBI" id="CHEBI:59789"/>
    </ligand>
</feature>
<feature type="binding site" evidence="6 11 12">
    <location>
        <position position="211"/>
    </location>
    <ligand>
        <name>S-adenosyl-L-methionine</name>
        <dbReference type="ChEBI" id="CHEBI:59789"/>
    </ligand>
</feature>
<feature type="binding site" evidence="6 11 12">
    <location>
        <position position="235"/>
    </location>
    <ligand>
        <name>S-adenosyl-L-methionine</name>
        <dbReference type="ChEBI" id="CHEBI:59789"/>
    </ligand>
</feature>
<feature type="binding site" evidence="2 6 11 12">
    <location>
        <position position="258"/>
    </location>
    <ligand>
        <name>S-adenosyl-L-methionine</name>
        <dbReference type="ChEBI" id="CHEBI:59789"/>
    </ligand>
</feature>
<feature type="binding site" evidence="6 11 12">
    <location>
        <begin position="278"/>
        <end position="279"/>
    </location>
    <ligand>
        <name>S-adenosyl-L-methionine</name>
        <dbReference type="ChEBI" id="CHEBI:59789"/>
    </ligand>
</feature>
<feature type="binding site" evidence="6 11 12">
    <location>
        <position position="292"/>
    </location>
    <ligand>
        <name>S-adenosyl-L-methionine</name>
        <dbReference type="ChEBI" id="CHEBI:59789"/>
    </ligand>
</feature>
<feature type="binding site" evidence="6 11 12">
    <location>
        <begin position="296"/>
        <end position="297"/>
    </location>
    <ligand>
        <name>substrate</name>
    </ligand>
</feature>
<feature type="mutagenesis site" description="Loss of enzymatic activity." evidence="6">
    <original>H</original>
    <variation>A</variation>
    <location>
        <position position="296"/>
    </location>
</feature>
<feature type="sequence conflict" description="In Ref. 2; AFB74611." evidence="9" ref="2">
    <original>RQT</original>
    <variation>HQS</variation>
    <location>
        <begin position="15"/>
        <end position="17"/>
    </location>
</feature>
<feature type="sequence conflict" description="In Ref. 2; AFB74611." evidence="9" ref="2">
    <original>F</original>
    <variation>V</variation>
    <location>
        <position position="221"/>
    </location>
</feature>
<feature type="helix" evidence="14">
    <location>
        <begin position="35"/>
        <end position="57"/>
    </location>
</feature>
<feature type="helix" evidence="14">
    <location>
        <begin position="60"/>
        <end position="65"/>
    </location>
</feature>
<feature type="strand" evidence="15">
    <location>
        <begin position="72"/>
        <end position="74"/>
    </location>
</feature>
<feature type="helix" evidence="14">
    <location>
        <begin position="75"/>
        <end position="79"/>
    </location>
</feature>
<feature type="helix" evidence="14">
    <location>
        <begin position="83"/>
        <end position="85"/>
    </location>
</feature>
<feature type="helix" evidence="14">
    <location>
        <begin position="91"/>
        <end position="104"/>
    </location>
</feature>
<feature type="strand" evidence="14">
    <location>
        <begin position="107"/>
        <end position="111"/>
    </location>
</feature>
<feature type="helix" evidence="14">
    <location>
        <begin position="114"/>
        <end position="118"/>
    </location>
</feature>
<feature type="strand" evidence="14">
    <location>
        <begin position="130"/>
        <end position="132"/>
    </location>
</feature>
<feature type="helix" evidence="14">
    <location>
        <begin position="135"/>
        <end position="138"/>
    </location>
</feature>
<feature type="turn" evidence="14">
    <location>
        <begin position="144"/>
        <end position="146"/>
    </location>
</feature>
<feature type="helix" evidence="14">
    <location>
        <begin position="151"/>
        <end position="157"/>
    </location>
</feature>
<feature type="helix" evidence="14">
    <location>
        <begin position="160"/>
        <end position="166"/>
    </location>
</feature>
<feature type="helix" evidence="14">
    <location>
        <begin position="167"/>
        <end position="170"/>
    </location>
</feature>
<feature type="helix" evidence="14">
    <location>
        <begin position="171"/>
        <end position="174"/>
    </location>
</feature>
<feature type="helix" evidence="14">
    <location>
        <begin position="180"/>
        <end position="185"/>
    </location>
</feature>
<feature type="helix" evidence="14">
    <location>
        <begin position="189"/>
        <end position="195"/>
    </location>
</feature>
<feature type="helix" evidence="14">
    <location>
        <begin position="197"/>
        <end position="221"/>
    </location>
</feature>
<feature type="turn" evidence="14">
    <location>
        <begin position="224"/>
        <end position="227"/>
    </location>
</feature>
<feature type="strand" evidence="14">
    <location>
        <begin position="230"/>
        <end position="234"/>
    </location>
</feature>
<feature type="turn" evidence="13">
    <location>
        <begin position="237"/>
        <end position="239"/>
    </location>
</feature>
<feature type="helix" evidence="14">
    <location>
        <begin position="240"/>
        <end position="248"/>
    </location>
</feature>
<feature type="strand" evidence="14">
    <location>
        <begin position="253"/>
        <end position="258"/>
    </location>
</feature>
<feature type="helix" evidence="14">
    <location>
        <begin position="260"/>
        <end position="263"/>
    </location>
</feature>
<feature type="strand" evidence="14">
    <location>
        <begin position="272"/>
        <end position="276"/>
    </location>
</feature>
<feature type="turn" evidence="14">
    <location>
        <begin position="279"/>
        <end position="281"/>
    </location>
</feature>
<feature type="strand" evidence="14">
    <location>
        <begin position="287"/>
        <end position="294"/>
    </location>
</feature>
<feature type="helix" evidence="14">
    <location>
        <begin position="295"/>
        <end position="297"/>
    </location>
</feature>
<feature type="helix" evidence="14">
    <location>
        <begin position="300"/>
        <end position="313"/>
    </location>
</feature>
<feature type="strand" evidence="14">
    <location>
        <begin position="319"/>
        <end position="325"/>
    </location>
</feature>
<feature type="helix" evidence="14">
    <location>
        <begin position="335"/>
        <end position="350"/>
    </location>
</feature>
<feature type="helix" evidence="14">
    <location>
        <begin position="359"/>
        <end position="368"/>
    </location>
</feature>
<feature type="strand" evidence="14">
    <location>
        <begin position="373"/>
        <end position="380"/>
    </location>
</feature>
<feature type="strand" evidence="14">
    <location>
        <begin position="383"/>
        <end position="389"/>
    </location>
</feature>
<evidence type="ECO:0000250" key="1">
    <source>
        <dbReference type="UniProtKB" id="Q5C9L7"/>
    </source>
</evidence>
<evidence type="ECO:0000255" key="2">
    <source>
        <dbReference type="PROSITE-ProRule" id="PRU01020"/>
    </source>
</evidence>
<evidence type="ECO:0000269" key="3">
    <source>
    </source>
</evidence>
<evidence type="ECO:0000269" key="4">
    <source>
    </source>
</evidence>
<evidence type="ECO:0000269" key="5">
    <source>
    </source>
</evidence>
<evidence type="ECO:0000269" key="6">
    <source ref="5"/>
</evidence>
<evidence type="ECO:0000303" key="7">
    <source>
    </source>
</evidence>
<evidence type="ECO:0000303" key="8">
    <source>
    </source>
</evidence>
<evidence type="ECO:0000305" key="9"/>
<evidence type="ECO:0000305" key="10">
    <source>
    </source>
</evidence>
<evidence type="ECO:0007744" key="11">
    <source>
        <dbReference type="PDB" id="6I6K"/>
    </source>
</evidence>
<evidence type="ECO:0007744" key="12">
    <source>
        <dbReference type="PDB" id="6I6N"/>
    </source>
</evidence>
<evidence type="ECO:0007829" key="13">
    <source>
        <dbReference type="PDB" id="6I5Z"/>
    </source>
</evidence>
<evidence type="ECO:0007829" key="14">
    <source>
        <dbReference type="PDB" id="6I6M"/>
    </source>
</evidence>
<evidence type="ECO:0007829" key="15">
    <source>
        <dbReference type="PDB" id="6I6N"/>
    </source>
</evidence>
<reference key="1">
    <citation type="journal article" date="2012" name="Plant Mol. Biol.">
        <title>Integration of deep transcript and targeted metabolite profiles for eight cultivars of opium poppy.</title>
        <authorList>
            <person name="Desgagne-Penix I."/>
            <person name="Farrow S.C."/>
            <person name="Cram D."/>
            <person name="Nowak J."/>
            <person name="Facchini P.J."/>
        </authorList>
    </citation>
    <scope>NUCLEOTIDE SEQUENCE [MRNA]</scope>
</reference>
<reference key="2">
    <citation type="journal article" date="2012" name="Science">
        <title>A Papaver somniferum 10-gene cluster for synthesis of the anticancer alkaloid noscapine.</title>
        <authorList>
            <person name="Winzer T."/>
            <person name="Gazda V."/>
            <person name="He Z."/>
            <person name="Kaminski F."/>
            <person name="Kern M."/>
            <person name="Larson T.R."/>
            <person name="Li Y."/>
            <person name="Meade F."/>
            <person name="Teodor R."/>
            <person name="Vaistij F.E."/>
            <person name="Walker C."/>
            <person name="Bowser T.A."/>
            <person name="Graham I.A."/>
        </authorList>
    </citation>
    <scope>NUCLEOTIDE SEQUENCE [GENOMIC DNA]</scope>
    <scope>FUNCTION</scope>
    <scope>CATALYTIC ACTIVITY</scope>
    <scope>TISSUE SPECIFICITY</scope>
</reference>
<reference key="3">
    <citation type="journal article" date="2012" name="Plant Physiol.">
        <title>Characterization of three O-methyltransferases involved in noscapine biosynthesis in opium poppy.</title>
        <authorList>
            <person name="Dang T.T."/>
            <person name="Facchini P.J."/>
        </authorList>
    </citation>
    <scope>FUNCTION</scope>
    <scope>CATALYTIC ACTIVITY</scope>
    <scope>BIOPHYSICOCHEMICAL PROPERTIES</scope>
    <scope>TISSUE SPECIFICITY</scope>
</reference>
<reference key="4">
    <citation type="journal article" date="2018" name="Proc. Natl. Acad. Sci. U.S.A.">
        <title>Complete biosynthesis of noscapine and halogenated alkaloids in yeast.</title>
        <authorList>
            <person name="Li Y."/>
            <person name="Li S."/>
            <person name="Thodey K."/>
            <person name="Trenchard I."/>
            <person name="Cravens A."/>
            <person name="Smolke C.D."/>
        </authorList>
    </citation>
    <scope>FUNCTION</scope>
</reference>
<reference key="5">
    <citation type="journal article" date="2019" name="ACS Catal.">
        <title>Structure of Papaver somniferum O-methyltransferase 1 reveals initiation of noscapine biosynthesis with implications for plant natural product methylation.</title>
        <authorList>
            <person name="Cabry M.P."/>
            <person name="Offen W.A."/>
            <person name="Saleh P."/>
            <person name="Li Y."/>
            <person name="Winzer T."/>
            <person name="Graham I.A."/>
            <person name="Davies G.J."/>
        </authorList>
    </citation>
    <scope>X-RAY CRYSTALLOGRAPHY (1.20 ANGSTROMS) IN COMPLEX WITH SUBSTRATE AND S-ADENOSYL-L-HOMOCYSTEINE</scope>
    <scope>CATALYTIC ACTIVITY</scope>
    <scope>ACTIVE SITE</scope>
    <scope>SUBUNIT</scope>
    <scope>MUTAGENESIS OF HIS-296</scope>
</reference>
<proteinExistence type="evidence at protein level"/>
<gene>
    <name evidence="7" type="primary">SOMT1</name>
    <name evidence="8" type="synonym">PSMT1</name>
</gene>